<protein>
    <recommendedName>
        <fullName evidence="1">Small ribosomal subunit protein bS21</fullName>
    </recommendedName>
    <alternativeName>
        <fullName evidence="2">30S ribosomal protein S21</fullName>
    </alternativeName>
</protein>
<reference key="1">
    <citation type="journal article" date="2003" name="Proc. Natl. Acad. Sci. U.S.A.">
        <title>The complete genome sequence of Chromobacterium violaceum reveals remarkable and exploitable bacterial adaptability.</title>
        <authorList>
            <person name="Vasconcelos A.T.R."/>
            <person name="de Almeida D.F."/>
            <person name="Hungria M."/>
            <person name="Guimaraes C.T."/>
            <person name="Antonio R.V."/>
            <person name="Almeida F.C."/>
            <person name="de Almeida L.G.P."/>
            <person name="de Almeida R."/>
            <person name="Alves-Gomes J.A."/>
            <person name="Andrade E.M."/>
            <person name="Araripe J."/>
            <person name="de Araujo M.F.F."/>
            <person name="Astolfi-Filho S."/>
            <person name="Azevedo V."/>
            <person name="Baptista A.J."/>
            <person name="Bataus L.A.M."/>
            <person name="Batista J.S."/>
            <person name="Belo A."/>
            <person name="van den Berg C."/>
            <person name="Bogo M."/>
            <person name="Bonatto S."/>
            <person name="Bordignon J."/>
            <person name="Brigido M.M."/>
            <person name="Brito C.A."/>
            <person name="Brocchi M."/>
            <person name="Burity H.A."/>
            <person name="Camargo A.A."/>
            <person name="Cardoso D.D.P."/>
            <person name="Carneiro N.P."/>
            <person name="Carraro D.M."/>
            <person name="Carvalho C.M.B."/>
            <person name="Cascardo J.C.M."/>
            <person name="Cavada B.S."/>
            <person name="Chueire L.M.O."/>
            <person name="Creczynski-Pasa T.B."/>
            <person name="Cunha-Junior N.C."/>
            <person name="Fagundes N."/>
            <person name="Falcao C.L."/>
            <person name="Fantinatti F."/>
            <person name="Farias I.P."/>
            <person name="Felipe M.S.S."/>
            <person name="Ferrari L.P."/>
            <person name="Ferro J.A."/>
            <person name="Ferro M.I.T."/>
            <person name="Franco G.R."/>
            <person name="Freitas N.S.A."/>
            <person name="Furlan L.R."/>
            <person name="Gazzinelli R.T."/>
            <person name="Gomes E.A."/>
            <person name="Goncalves P.R."/>
            <person name="Grangeiro T.B."/>
            <person name="Grattapaglia D."/>
            <person name="Grisard E.C."/>
            <person name="Hanna E.S."/>
            <person name="Jardim S.N."/>
            <person name="Laurino J."/>
            <person name="Leoi L.C.T."/>
            <person name="Lima L.F.A."/>
            <person name="Loureiro M.F."/>
            <person name="Lyra M.C.C.P."/>
            <person name="Madeira H.M.F."/>
            <person name="Manfio G.P."/>
            <person name="Maranhao A.Q."/>
            <person name="Martins W.S."/>
            <person name="di Mauro S.M.Z."/>
            <person name="de Medeiros S.R.B."/>
            <person name="Meissner R.V."/>
            <person name="Moreira M.A.M."/>
            <person name="Nascimento F.F."/>
            <person name="Nicolas M.F."/>
            <person name="Oliveira J.G."/>
            <person name="Oliveira S.C."/>
            <person name="Paixao R.F.C."/>
            <person name="Parente J.A."/>
            <person name="Pedrosa F.O."/>
            <person name="Pena S.D.J."/>
            <person name="Pereira J.O."/>
            <person name="Pereira M."/>
            <person name="Pinto L.S.R.C."/>
            <person name="Pinto L.S."/>
            <person name="Porto J.I.R."/>
            <person name="Potrich D.P."/>
            <person name="Ramalho-Neto C.E."/>
            <person name="Reis A.M.M."/>
            <person name="Rigo L.U."/>
            <person name="Rondinelli E."/>
            <person name="Santos E.B.P."/>
            <person name="Santos F.R."/>
            <person name="Schneider M.P.C."/>
            <person name="Seuanez H.N."/>
            <person name="Silva A.M.R."/>
            <person name="da Silva A.L.C."/>
            <person name="Silva D.W."/>
            <person name="Silva R."/>
            <person name="Simoes I.C."/>
            <person name="Simon D."/>
            <person name="Soares C.M.A."/>
            <person name="Soares R.B.A."/>
            <person name="Souza E.M."/>
            <person name="Souza K.R.L."/>
            <person name="Souza R.C."/>
            <person name="Steffens M.B.R."/>
            <person name="Steindel M."/>
            <person name="Teixeira S.R."/>
            <person name="Urmenyi T."/>
            <person name="Vettore A."/>
            <person name="Wassem R."/>
            <person name="Zaha A."/>
            <person name="Simpson A.J.G."/>
        </authorList>
    </citation>
    <scope>NUCLEOTIDE SEQUENCE [LARGE SCALE GENOMIC DNA]</scope>
    <source>
        <strain>ATCC 12472 / DSM 30191 / JCM 1249 / CCUG 213 / NBRC 12614 / NCIMB 9131 / NCTC 9757 / MK</strain>
    </source>
</reference>
<sequence length="70" mass="8496">MPTIRVKENEPFEVALRRFKRAVEKTGLLTELRAREFYEKPTTERKRKHAAAVKRHYKRIRSQMLPPKLY</sequence>
<organism>
    <name type="scientific">Chromobacterium violaceum (strain ATCC 12472 / DSM 30191 / JCM 1249 / CCUG 213 / NBRC 12614 / NCIMB 9131 / NCTC 9757 / MK)</name>
    <dbReference type="NCBI Taxonomy" id="243365"/>
    <lineage>
        <taxon>Bacteria</taxon>
        <taxon>Pseudomonadati</taxon>
        <taxon>Pseudomonadota</taxon>
        <taxon>Betaproteobacteria</taxon>
        <taxon>Neisseriales</taxon>
        <taxon>Chromobacteriaceae</taxon>
        <taxon>Chromobacterium</taxon>
    </lineage>
</organism>
<accession>Q7NRL5</accession>
<comment type="similarity">
    <text evidence="1">Belongs to the bacterial ribosomal protein bS21 family.</text>
</comment>
<evidence type="ECO:0000255" key="1">
    <source>
        <dbReference type="HAMAP-Rule" id="MF_00358"/>
    </source>
</evidence>
<evidence type="ECO:0000305" key="2"/>
<name>RS21_CHRVO</name>
<feature type="chain" id="PRO_0000178327" description="Small ribosomal subunit protein bS21">
    <location>
        <begin position="1"/>
        <end position="70"/>
    </location>
</feature>
<keyword id="KW-1185">Reference proteome</keyword>
<keyword id="KW-0687">Ribonucleoprotein</keyword>
<keyword id="KW-0689">Ribosomal protein</keyword>
<dbReference type="EMBL" id="AE016825">
    <property type="protein sequence ID" value="AAQ61427.1"/>
    <property type="molecule type" value="Genomic_DNA"/>
</dbReference>
<dbReference type="RefSeq" id="WP_011137312.1">
    <property type="nucleotide sequence ID" value="NC_005085.1"/>
</dbReference>
<dbReference type="SMR" id="Q7NRL5"/>
<dbReference type="STRING" id="243365.CV_3765"/>
<dbReference type="GeneID" id="66364998"/>
<dbReference type="KEGG" id="cvi:CV_3765"/>
<dbReference type="eggNOG" id="COG0828">
    <property type="taxonomic scope" value="Bacteria"/>
</dbReference>
<dbReference type="HOGENOM" id="CLU_159258_1_2_4"/>
<dbReference type="OrthoDB" id="9799244at2"/>
<dbReference type="Proteomes" id="UP000001424">
    <property type="component" value="Chromosome"/>
</dbReference>
<dbReference type="GO" id="GO:1990904">
    <property type="term" value="C:ribonucleoprotein complex"/>
    <property type="evidence" value="ECO:0007669"/>
    <property type="project" value="UniProtKB-KW"/>
</dbReference>
<dbReference type="GO" id="GO:0005840">
    <property type="term" value="C:ribosome"/>
    <property type="evidence" value="ECO:0007669"/>
    <property type="project" value="UniProtKB-KW"/>
</dbReference>
<dbReference type="GO" id="GO:0003735">
    <property type="term" value="F:structural constituent of ribosome"/>
    <property type="evidence" value="ECO:0007669"/>
    <property type="project" value="InterPro"/>
</dbReference>
<dbReference type="GO" id="GO:0006412">
    <property type="term" value="P:translation"/>
    <property type="evidence" value="ECO:0007669"/>
    <property type="project" value="UniProtKB-UniRule"/>
</dbReference>
<dbReference type="Gene3D" id="1.20.5.1150">
    <property type="entry name" value="Ribosomal protein S8"/>
    <property type="match status" value="1"/>
</dbReference>
<dbReference type="HAMAP" id="MF_00358">
    <property type="entry name" value="Ribosomal_bS21"/>
    <property type="match status" value="1"/>
</dbReference>
<dbReference type="InterPro" id="IPR001911">
    <property type="entry name" value="Ribosomal_bS21"/>
</dbReference>
<dbReference type="InterPro" id="IPR018278">
    <property type="entry name" value="Ribosomal_bS21_CS"/>
</dbReference>
<dbReference type="InterPro" id="IPR038380">
    <property type="entry name" value="Ribosomal_bS21_sf"/>
</dbReference>
<dbReference type="NCBIfam" id="TIGR00030">
    <property type="entry name" value="S21p"/>
    <property type="match status" value="1"/>
</dbReference>
<dbReference type="PANTHER" id="PTHR21109">
    <property type="entry name" value="MITOCHONDRIAL 28S RIBOSOMAL PROTEIN S21"/>
    <property type="match status" value="1"/>
</dbReference>
<dbReference type="PANTHER" id="PTHR21109:SF22">
    <property type="entry name" value="SMALL RIBOSOMAL SUBUNIT PROTEIN BS21"/>
    <property type="match status" value="1"/>
</dbReference>
<dbReference type="Pfam" id="PF01165">
    <property type="entry name" value="Ribosomal_S21"/>
    <property type="match status" value="1"/>
</dbReference>
<dbReference type="PRINTS" id="PR00976">
    <property type="entry name" value="RIBOSOMALS21"/>
</dbReference>
<dbReference type="PROSITE" id="PS01181">
    <property type="entry name" value="RIBOSOMAL_S21"/>
    <property type="match status" value="1"/>
</dbReference>
<proteinExistence type="inferred from homology"/>
<gene>
    <name evidence="1" type="primary">rpsU</name>
    <name type="ordered locus">CV_3765</name>
</gene>